<protein>
    <recommendedName>
        <fullName evidence="1">Signal recognition particle protein</fullName>
        <ecNumber evidence="1">3.6.5.4</ecNumber>
    </recommendedName>
    <alternativeName>
        <fullName evidence="1">Fifty-four homolog</fullName>
    </alternativeName>
</protein>
<reference key="1">
    <citation type="journal article" date="2002" name="Science">
        <title>50 million years of genomic stasis in endosymbiotic bacteria.</title>
        <authorList>
            <person name="Tamas I."/>
            <person name="Klasson L."/>
            <person name="Canbaeck B."/>
            <person name="Naeslund A.K."/>
            <person name="Eriksson A.-S."/>
            <person name="Wernegreen J.J."/>
            <person name="Sandstroem J.P."/>
            <person name="Moran N.A."/>
            <person name="Andersson S.G.E."/>
        </authorList>
    </citation>
    <scope>NUCLEOTIDE SEQUENCE [LARGE SCALE GENOMIC DNA]</scope>
    <source>
        <strain>Sg</strain>
    </source>
</reference>
<keyword id="KW-0963">Cytoplasm</keyword>
<keyword id="KW-0342">GTP-binding</keyword>
<keyword id="KW-0378">Hydrolase</keyword>
<keyword id="KW-0547">Nucleotide-binding</keyword>
<keyword id="KW-0687">Ribonucleoprotein</keyword>
<keyword id="KW-0694">RNA-binding</keyword>
<keyword id="KW-0733">Signal recognition particle</keyword>
<proteinExistence type="inferred from homology"/>
<dbReference type="EC" id="3.6.5.4" evidence="1"/>
<dbReference type="EMBL" id="AE013218">
    <property type="protein sequence ID" value="AAM67932.1"/>
    <property type="molecule type" value="Genomic_DNA"/>
</dbReference>
<dbReference type="RefSeq" id="WP_011053899.1">
    <property type="nucleotide sequence ID" value="NC_004061.1"/>
</dbReference>
<dbReference type="SMR" id="Q8K9F7"/>
<dbReference type="STRING" id="198804.BUsg_380"/>
<dbReference type="GeneID" id="93003850"/>
<dbReference type="KEGG" id="bas:BUsg_380"/>
<dbReference type="eggNOG" id="COG0541">
    <property type="taxonomic scope" value="Bacteria"/>
</dbReference>
<dbReference type="HOGENOM" id="CLU_009301_6_0_6"/>
<dbReference type="Proteomes" id="UP000000416">
    <property type="component" value="Chromosome"/>
</dbReference>
<dbReference type="GO" id="GO:0048500">
    <property type="term" value="C:signal recognition particle"/>
    <property type="evidence" value="ECO:0007669"/>
    <property type="project" value="UniProtKB-UniRule"/>
</dbReference>
<dbReference type="GO" id="GO:0008312">
    <property type="term" value="F:7S RNA binding"/>
    <property type="evidence" value="ECO:0007669"/>
    <property type="project" value="InterPro"/>
</dbReference>
<dbReference type="GO" id="GO:0016887">
    <property type="term" value="F:ATP hydrolysis activity"/>
    <property type="evidence" value="ECO:0007669"/>
    <property type="project" value="InterPro"/>
</dbReference>
<dbReference type="GO" id="GO:0005525">
    <property type="term" value="F:GTP binding"/>
    <property type="evidence" value="ECO:0007669"/>
    <property type="project" value="UniProtKB-UniRule"/>
</dbReference>
<dbReference type="GO" id="GO:0003924">
    <property type="term" value="F:GTPase activity"/>
    <property type="evidence" value="ECO:0007669"/>
    <property type="project" value="UniProtKB-UniRule"/>
</dbReference>
<dbReference type="GO" id="GO:0006614">
    <property type="term" value="P:SRP-dependent cotranslational protein targeting to membrane"/>
    <property type="evidence" value="ECO:0007669"/>
    <property type="project" value="InterPro"/>
</dbReference>
<dbReference type="CDD" id="cd18539">
    <property type="entry name" value="SRP_G"/>
    <property type="match status" value="1"/>
</dbReference>
<dbReference type="Gene3D" id="3.40.50.300">
    <property type="entry name" value="P-loop containing nucleotide triphosphate hydrolases"/>
    <property type="match status" value="1"/>
</dbReference>
<dbReference type="Gene3D" id="1.20.120.140">
    <property type="entry name" value="Signal recognition particle SRP54, nucleotide-binding domain"/>
    <property type="match status" value="1"/>
</dbReference>
<dbReference type="Gene3D" id="1.10.260.30">
    <property type="entry name" value="Signal recognition particle, SRP54 subunit, M-domain"/>
    <property type="match status" value="1"/>
</dbReference>
<dbReference type="HAMAP" id="MF_00306">
    <property type="entry name" value="SRP54"/>
    <property type="match status" value="1"/>
</dbReference>
<dbReference type="InterPro" id="IPR003593">
    <property type="entry name" value="AAA+_ATPase"/>
</dbReference>
<dbReference type="InterPro" id="IPR027417">
    <property type="entry name" value="P-loop_NTPase"/>
</dbReference>
<dbReference type="InterPro" id="IPR036891">
    <property type="entry name" value="Signal_recog_part_SRP54_M_sf"/>
</dbReference>
<dbReference type="InterPro" id="IPR013822">
    <property type="entry name" value="Signal_recog_particl_SRP54_hlx"/>
</dbReference>
<dbReference type="InterPro" id="IPR004125">
    <property type="entry name" value="Signal_recog_particle_SRP54_M"/>
</dbReference>
<dbReference type="InterPro" id="IPR004780">
    <property type="entry name" value="SRP"/>
</dbReference>
<dbReference type="InterPro" id="IPR036225">
    <property type="entry name" value="SRP/SRP_N"/>
</dbReference>
<dbReference type="InterPro" id="IPR022941">
    <property type="entry name" value="SRP54"/>
</dbReference>
<dbReference type="InterPro" id="IPR000897">
    <property type="entry name" value="SRP54_GTPase_dom"/>
</dbReference>
<dbReference type="InterPro" id="IPR042101">
    <property type="entry name" value="SRP54_N_sf"/>
</dbReference>
<dbReference type="NCBIfam" id="TIGR00959">
    <property type="entry name" value="ffh"/>
    <property type="match status" value="1"/>
</dbReference>
<dbReference type="PANTHER" id="PTHR11564">
    <property type="entry name" value="SIGNAL RECOGNITION PARTICLE 54K PROTEIN SRP54"/>
    <property type="match status" value="1"/>
</dbReference>
<dbReference type="PANTHER" id="PTHR11564:SF5">
    <property type="entry name" value="SIGNAL RECOGNITION PARTICLE SUBUNIT SRP54"/>
    <property type="match status" value="1"/>
</dbReference>
<dbReference type="Pfam" id="PF00448">
    <property type="entry name" value="SRP54"/>
    <property type="match status" value="1"/>
</dbReference>
<dbReference type="Pfam" id="PF02881">
    <property type="entry name" value="SRP54_N"/>
    <property type="match status" value="1"/>
</dbReference>
<dbReference type="Pfam" id="PF02978">
    <property type="entry name" value="SRP_SPB"/>
    <property type="match status" value="1"/>
</dbReference>
<dbReference type="SMART" id="SM00382">
    <property type="entry name" value="AAA"/>
    <property type="match status" value="1"/>
</dbReference>
<dbReference type="SMART" id="SM00962">
    <property type="entry name" value="SRP54"/>
    <property type="match status" value="1"/>
</dbReference>
<dbReference type="SMART" id="SM00963">
    <property type="entry name" value="SRP54_N"/>
    <property type="match status" value="1"/>
</dbReference>
<dbReference type="SUPFAM" id="SSF47364">
    <property type="entry name" value="Domain of the SRP/SRP receptor G-proteins"/>
    <property type="match status" value="1"/>
</dbReference>
<dbReference type="SUPFAM" id="SSF52540">
    <property type="entry name" value="P-loop containing nucleoside triphosphate hydrolases"/>
    <property type="match status" value="1"/>
</dbReference>
<dbReference type="SUPFAM" id="SSF47446">
    <property type="entry name" value="Signal peptide-binding domain"/>
    <property type="match status" value="1"/>
</dbReference>
<dbReference type="PROSITE" id="PS00300">
    <property type="entry name" value="SRP54"/>
    <property type="match status" value="1"/>
</dbReference>
<feature type="chain" id="PRO_0000101151" description="Signal recognition particle protein">
    <location>
        <begin position="1"/>
        <end position="450"/>
    </location>
</feature>
<feature type="binding site" evidence="1">
    <location>
        <begin position="107"/>
        <end position="114"/>
    </location>
    <ligand>
        <name>GTP</name>
        <dbReference type="ChEBI" id="CHEBI:37565"/>
    </ligand>
</feature>
<feature type="binding site" evidence="1">
    <location>
        <begin position="190"/>
        <end position="194"/>
    </location>
    <ligand>
        <name>GTP</name>
        <dbReference type="ChEBI" id="CHEBI:37565"/>
    </ligand>
</feature>
<feature type="binding site" evidence="1">
    <location>
        <begin position="248"/>
        <end position="251"/>
    </location>
    <ligand>
        <name>GTP</name>
        <dbReference type="ChEBI" id="CHEBI:37565"/>
    </ligand>
</feature>
<comment type="function">
    <text evidence="1">Involved in targeting and insertion of nascent membrane proteins into the cytoplasmic membrane. Binds to the hydrophobic signal sequence of the ribosome-nascent chain (RNC) as it emerges from the ribosomes. The SRP-RNC complex is then targeted to the cytoplasmic membrane where it interacts with the SRP receptor FtsY. Interaction with FtsY leads to the transfer of the RNC complex to the Sec translocase for insertion into the membrane, the hydrolysis of GTP by both Ffh and FtsY, and the dissociation of the SRP-FtsY complex into the individual components.</text>
</comment>
<comment type="catalytic activity">
    <reaction evidence="1">
        <text>GTP + H2O = GDP + phosphate + H(+)</text>
        <dbReference type="Rhea" id="RHEA:19669"/>
        <dbReference type="ChEBI" id="CHEBI:15377"/>
        <dbReference type="ChEBI" id="CHEBI:15378"/>
        <dbReference type="ChEBI" id="CHEBI:37565"/>
        <dbReference type="ChEBI" id="CHEBI:43474"/>
        <dbReference type="ChEBI" id="CHEBI:58189"/>
        <dbReference type="EC" id="3.6.5.4"/>
    </reaction>
</comment>
<comment type="subunit">
    <text evidence="1">Part of the signal recognition particle protein translocation system, which is composed of SRP and FtsY. SRP is a ribonucleoprotein composed of Ffh and a 4.5S RNA molecule.</text>
</comment>
<comment type="subcellular location">
    <subcellularLocation>
        <location evidence="1">Cytoplasm</location>
    </subcellularLocation>
    <text evidence="1">The SRP-RNC complex is targeted to the cytoplasmic membrane.</text>
</comment>
<comment type="domain">
    <text evidence="1">Composed of three domains: the N-terminal N domain, which is responsible for interactions with the ribosome, the central G domain, which binds GTP, and the C-terminal M domain, which binds the RNA and the signal sequence of the RNC.</text>
</comment>
<comment type="similarity">
    <text evidence="1">Belongs to the GTP-binding SRP family. SRP54 subfamily.</text>
</comment>
<accession>Q8K9F7</accession>
<name>SRP54_BUCAP</name>
<gene>
    <name evidence="1" type="primary">ffh</name>
    <name type="ordered locus">BUsg_380</name>
</gene>
<sequence>MFNNLTERLSQSLRKIINKGRLTEENIKDTIREVRKALLEADVTLSVIKKFIQNVSKKAIGHEINKSLTPGQEFIKIVKNELILSMGEKNHDLNLSIQPPAIILVVGLQGVGKTTTLVKLAKWIKEKYKKKILTVSTDIYRAAAIKQLQILSDQVKIDFYLSDTTQTPINITKEAIEHAKLKLYDLLLIDTAGRLHINTEMMNEINTIQNISKPIETLLIVDSMMGQDAINIAKKFSASLSISGIVITKTDSDARSGVALSIRHITGKPIKFIGTGEKLHQLEPFHPERIADRILGMNQVISLIKDIEEKVNQSQVKNLTKKFRKGDDFNLNDFLIQLKEMKNMGNLNYFIEKFSKNKILSNNPLLGENKNTLNRIEAIIYSMTHKERMHPIIIKGSRKRRIALGSGTKIQDVNKLLKNFDNIKKIMKKIKKGGIGKMIRNISNILPKNF</sequence>
<evidence type="ECO:0000255" key="1">
    <source>
        <dbReference type="HAMAP-Rule" id="MF_00306"/>
    </source>
</evidence>
<organism>
    <name type="scientific">Buchnera aphidicola subsp. Schizaphis graminum (strain Sg)</name>
    <dbReference type="NCBI Taxonomy" id="198804"/>
    <lineage>
        <taxon>Bacteria</taxon>
        <taxon>Pseudomonadati</taxon>
        <taxon>Pseudomonadota</taxon>
        <taxon>Gammaproteobacteria</taxon>
        <taxon>Enterobacterales</taxon>
        <taxon>Erwiniaceae</taxon>
        <taxon>Buchnera</taxon>
    </lineage>
</organism>